<protein>
    <recommendedName>
        <fullName>Uncharacterized gerABC family protein DDB_G0291103</fullName>
    </recommendedName>
</protein>
<feature type="signal peptide" evidence="1">
    <location>
        <begin position="1"/>
        <end position="20"/>
    </location>
</feature>
<feature type="chain" id="PRO_0000312738" description="Uncharacterized gerABC family protein DDB_G0291103">
    <location>
        <begin position="21"/>
        <end position="108"/>
    </location>
</feature>
<feature type="glycosylation site" description="N-linked (GlcNAc...) asparagine" evidence="1">
    <location>
        <position position="39"/>
    </location>
</feature>
<accession>Q54F49</accession>
<evidence type="ECO:0000255" key="1"/>
<evidence type="ECO:0000305" key="2"/>
<name>GERL3_DICDI</name>
<sequence>MNLKSIIFVLFIAFFAFSLANDDDPTCPNGFICFWVGQNYTGDQWKWTPRMNYRDLPRQYHNNVGSYVAKTNACFKNWIPYLTFECNEGDSSHSFTFGKIIDGVSHEC</sequence>
<keyword id="KW-0325">Glycoprotein</keyword>
<keyword id="KW-1185">Reference proteome</keyword>
<keyword id="KW-0964">Secreted</keyword>
<keyword id="KW-0732">Signal</keyword>
<gene>
    <name type="ORF">DDB_G0291103</name>
</gene>
<dbReference type="EMBL" id="AAFI02000175">
    <property type="protein sequence ID" value="EAL61899.1"/>
    <property type="molecule type" value="Genomic_DNA"/>
</dbReference>
<dbReference type="RefSeq" id="XP_635405.1">
    <property type="nucleotide sequence ID" value="XM_630313.1"/>
</dbReference>
<dbReference type="SMR" id="Q54F49"/>
<dbReference type="FunCoup" id="Q54F49">
    <property type="interactions" value="877"/>
</dbReference>
<dbReference type="GlyGen" id="Q54F49">
    <property type="glycosylation" value="1 site"/>
</dbReference>
<dbReference type="PaxDb" id="44689-DDB0189243"/>
<dbReference type="EnsemblProtists" id="EAL61899">
    <property type="protein sequence ID" value="EAL61899"/>
    <property type="gene ID" value="DDB_G0291103"/>
</dbReference>
<dbReference type="GeneID" id="8627989"/>
<dbReference type="KEGG" id="ddi:DDB_G0291103"/>
<dbReference type="dictyBase" id="DDB_G0291103"/>
<dbReference type="VEuPathDB" id="AmoebaDB:DDB_G0291103"/>
<dbReference type="eggNOG" id="ENOG502RIMA">
    <property type="taxonomic scope" value="Eukaryota"/>
</dbReference>
<dbReference type="HOGENOM" id="CLU_166911_0_0_1"/>
<dbReference type="InParanoid" id="Q54F49"/>
<dbReference type="OMA" id="WRATHTY"/>
<dbReference type="PhylomeDB" id="Q54F49"/>
<dbReference type="PRO" id="PR:Q54F49"/>
<dbReference type="Proteomes" id="UP000002195">
    <property type="component" value="Chromosome 5"/>
</dbReference>
<dbReference type="GO" id="GO:0005576">
    <property type="term" value="C:extracellular region"/>
    <property type="evidence" value="ECO:0007669"/>
    <property type="project" value="UniProtKB-SubCell"/>
</dbReference>
<dbReference type="Pfam" id="PF03995">
    <property type="entry name" value="Inhibitor_I36"/>
    <property type="match status" value="1"/>
</dbReference>
<comment type="subcellular location">
    <subcellularLocation>
        <location evidence="2">Secreted</location>
    </subcellularLocation>
</comment>
<comment type="similarity">
    <text evidence="2">Belongs to the Dictyostelium gerABC family.</text>
</comment>
<organism>
    <name type="scientific">Dictyostelium discoideum</name>
    <name type="common">Social amoeba</name>
    <dbReference type="NCBI Taxonomy" id="44689"/>
    <lineage>
        <taxon>Eukaryota</taxon>
        <taxon>Amoebozoa</taxon>
        <taxon>Evosea</taxon>
        <taxon>Eumycetozoa</taxon>
        <taxon>Dictyostelia</taxon>
        <taxon>Dictyosteliales</taxon>
        <taxon>Dictyosteliaceae</taxon>
        <taxon>Dictyostelium</taxon>
    </lineage>
</organism>
<proteinExistence type="inferred from homology"/>
<reference key="1">
    <citation type="journal article" date="2005" name="Nature">
        <title>The genome of the social amoeba Dictyostelium discoideum.</title>
        <authorList>
            <person name="Eichinger L."/>
            <person name="Pachebat J.A."/>
            <person name="Gloeckner G."/>
            <person name="Rajandream M.A."/>
            <person name="Sucgang R."/>
            <person name="Berriman M."/>
            <person name="Song J."/>
            <person name="Olsen R."/>
            <person name="Szafranski K."/>
            <person name="Xu Q."/>
            <person name="Tunggal B."/>
            <person name="Kummerfeld S."/>
            <person name="Madera M."/>
            <person name="Konfortov B.A."/>
            <person name="Rivero F."/>
            <person name="Bankier A.T."/>
            <person name="Lehmann R."/>
            <person name="Hamlin N."/>
            <person name="Davies R."/>
            <person name="Gaudet P."/>
            <person name="Fey P."/>
            <person name="Pilcher K."/>
            <person name="Chen G."/>
            <person name="Saunders D."/>
            <person name="Sodergren E.J."/>
            <person name="Davis P."/>
            <person name="Kerhornou A."/>
            <person name="Nie X."/>
            <person name="Hall N."/>
            <person name="Anjard C."/>
            <person name="Hemphill L."/>
            <person name="Bason N."/>
            <person name="Farbrother P."/>
            <person name="Desany B."/>
            <person name="Just E."/>
            <person name="Morio T."/>
            <person name="Rost R."/>
            <person name="Churcher C.M."/>
            <person name="Cooper J."/>
            <person name="Haydock S."/>
            <person name="van Driessche N."/>
            <person name="Cronin A."/>
            <person name="Goodhead I."/>
            <person name="Muzny D.M."/>
            <person name="Mourier T."/>
            <person name="Pain A."/>
            <person name="Lu M."/>
            <person name="Harper D."/>
            <person name="Lindsay R."/>
            <person name="Hauser H."/>
            <person name="James K.D."/>
            <person name="Quiles M."/>
            <person name="Madan Babu M."/>
            <person name="Saito T."/>
            <person name="Buchrieser C."/>
            <person name="Wardroper A."/>
            <person name="Felder M."/>
            <person name="Thangavelu M."/>
            <person name="Johnson D."/>
            <person name="Knights A."/>
            <person name="Loulseged H."/>
            <person name="Mungall K.L."/>
            <person name="Oliver K."/>
            <person name="Price C."/>
            <person name="Quail M.A."/>
            <person name="Urushihara H."/>
            <person name="Hernandez J."/>
            <person name="Rabbinowitsch E."/>
            <person name="Steffen D."/>
            <person name="Sanders M."/>
            <person name="Ma J."/>
            <person name="Kohara Y."/>
            <person name="Sharp S."/>
            <person name="Simmonds M.N."/>
            <person name="Spiegler S."/>
            <person name="Tivey A."/>
            <person name="Sugano S."/>
            <person name="White B."/>
            <person name="Walker D."/>
            <person name="Woodward J.R."/>
            <person name="Winckler T."/>
            <person name="Tanaka Y."/>
            <person name="Shaulsky G."/>
            <person name="Schleicher M."/>
            <person name="Weinstock G.M."/>
            <person name="Rosenthal A."/>
            <person name="Cox E.C."/>
            <person name="Chisholm R.L."/>
            <person name="Gibbs R.A."/>
            <person name="Loomis W.F."/>
            <person name="Platzer M."/>
            <person name="Kay R.R."/>
            <person name="Williams J.G."/>
            <person name="Dear P.H."/>
            <person name="Noegel A.A."/>
            <person name="Barrell B.G."/>
            <person name="Kuspa A."/>
        </authorList>
    </citation>
    <scope>NUCLEOTIDE SEQUENCE [LARGE SCALE GENOMIC DNA]</scope>
    <source>
        <strain>AX4</strain>
    </source>
</reference>